<comment type="function">
    <text evidence="1">Has nucleoside phosphatase activity towards nucleoside triphosphates and nucleoside diphosphates.</text>
</comment>
<comment type="catalytic activity">
    <reaction evidence="1">
        <text>a ribonucleoside 5'-triphosphate + H2O = a ribonucleoside 5'-diphosphate + phosphate + H(+)</text>
        <dbReference type="Rhea" id="RHEA:23680"/>
        <dbReference type="ChEBI" id="CHEBI:15377"/>
        <dbReference type="ChEBI" id="CHEBI:15378"/>
        <dbReference type="ChEBI" id="CHEBI:43474"/>
        <dbReference type="ChEBI" id="CHEBI:57930"/>
        <dbReference type="ChEBI" id="CHEBI:61557"/>
        <dbReference type="EC" id="3.6.1.15"/>
    </reaction>
</comment>
<comment type="catalytic activity">
    <reaction evidence="1">
        <text>a ribonucleoside 5'-diphosphate + H2O = a ribonucleoside 5'-phosphate + phosphate + H(+)</text>
        <dbReference type="Rhea" id="RHEA:36799"/>
        <dbReference type="ChEBI" id="CHEBI:15377"/>
        <dbReference type="ChEBI" id="CHEBI:15378"/>
        <dbReference type="ChEBI" id="CHEBI:43474"/>
        <dbReference type="ChEBI" id="CHEBI:57930"/>
        <dbReference type="ChEBI" id="CHEBI:58043"/>
        <dbReference type="EC" id="3.6.1.6"/>
    </reaction>
</comment>
<comment type="cofactor">
    <cofactor evidence="1">
        <name>Mg(2+)</name>
        <dbReference type="ChEBI" id="CHEBI:18420"/>
    </cofactor>
</comment>
<comment type="similarity">
    <text evidence="1">Belongs to the Ntdp family.</text>
</comment>
<organism>
    <name type="scientific">Staphylococcus aureus (strain JH9)</name>
    <dbReference type="NCBI Taxonomy" id="359786"/>
    <lineage>
        <taxon>Bacteria</taxon>
        <taxon>Bacillati</taxon>
        <taxon>Bacillota</taxon>
        <taxon>Bacilli</taxon>
        <taxon>Bacillales</taxon>
        <taxon>Staphylococcaceae</taxon>
        <taxon>Staphylococcus</taxon>
    </lineage>
</organism>
<evidence type="ECO:0000255" key="1">
    <source>
        <dbReference type="HAMAP-Rule" id="MF_01568"/>
    </source>
</evidence>
<reference key="1">
    <citation type="submission" date="2007-05" db="EMBL/GenBank/DDBJ databases">
        <title>Complete sequence of chromosome of Staphylococcus aureus subsp. aureus JH9.</title>
        <authorList>
            <consortium name="US DOE Joint Genome Institute"/>
            <person name="Copeland A."/>
            <person name="Lucas S."/>
            <person name="Lapidus A."/>
            <person name="Barry K."/>
            <person name="Detter J.C."/>
            <person name="Glavina del Rio T."/>
            <person name="Hammon N."/>
            <person name="Israni S."/>
            <person name="Pitluck S."/>
            <person name="Chain P."/>
            <person name="Malfatti S."/>
            <person name="Shin M."/>
            <person name="Vergez L."/>
            <person name="Schmutz J."/>
            <person name="Larimer F."/>
            <person name="Land M."/>
            <person name="Hauser L."/>
            <person name="Kyrpides N."/>
            <person name="Kim E."/>
            <person name="Tomasz A."/>
            <person name="Richardson P."/>
        </authorList>
    </citation>
    <scope>NUCLEOTIDE SEQUENCE [LARGE SCALE GENOMIC DNA]</scope>
    <source>
        <strain>JH9</strain>
    </source>
</reference>
<protein>
    <recommendedName>
        <fullName evidence="1">Nucleoside triphosphate/diphosphate phosphatase</fullName>
        <ecNumber evidence="1">3.6.1.15</ecNumber>
        <ecNumber evidence="1">3.6.1.6</ecNumber>
    </recommendedName>
</protein>
<dbReference type="EC" id="3.6.1.15" evidence="1"/>
<dbReference type="EC" id="3.6.1.6" evidence="1"/>
<dbReference type="EMBL" id="CP000703">
    <property type="protein sequence ID" value="ABQ49706.1"/>
    <property type="molecule type" value="Genomic_DNA"/>
</dbReference>
<dbReference type="RefSeq" id="WP_000251253.1">
    <property type="nucleotide sequence ID" value="NC_009487.1"/>
</dbReference>
<dbReference type="SMR" id="A5IU33"/>
<dbReference type="KEGG" id="saj:SaurJH9_1921"/>
<dbReference type="HOGENOM" id="CLU_109787_1_0_9"/>
<dbReference type="GO" id="GO:0000287">
    <property type="term" value="F:magnesium ion binding"/>
    <property type="evidence" value="ECO:0007669"/>
    <property type="project" value="UniProtKB-UniRule"/>
</dbReference>
<dbReference type="GO" id="GO:0017110">
    <property type="term" value="F:nucleoside diphosphate phosphatase activity"/>
    <property type="evidence" value="ECO:0007669"/>
    <property type="project" value="UniProtKB-UniRule"/>
</dbReference>
<dbReference type="GO" id="GO:0017111">
    <property type="term" value="F:ribonucleoside triphosphate phosphatase activity"/>
    <property type="evidence" value="ECO:0007669"/>
    <property type="project" value="UniProtKB-UniRule"/>
</dbReference>
<dbReference type="Gene3D" id="2.40.380.10">
    <property type="entry name" value="FomD-like"/>
    <property type="match status" value="1"/>
</dbReference>
<dbReference type="HAMAP" id="MF_01568">
    <property type="entry name" value="Ntdp"/>
    <property type="match status" value="1"/>
</dbReference>
<dbReference type="InterPro" id="IPR007295">
    <property type="entry name" value="DUF402"/>
</dbReference>
<dbReference type="InterPro" id="IPR035930">
    <property type="entry name" value="FomD-like_sf"/>
</dbReference>
<dbReference type="InterPro" id="IPR050212">
    <property type="entry name" value="Ntdp-like"/>
</dbReference>
<dbReference type="InterPro" id="IPR016882">
    <property type="entry name" value="SA1684"/>
</dbReference>
<dbReference type="NCBIfam" id="NF010183">
    <property type="entry name" value="PRK13662.1"/>
    <property type="match status" value="1"/>
</dbReference>
<dbReference type="PANTHER" id="PTHR39159">
    <property type="match status" value="1"/>
</dbReference>
<dbReference type="PANTHER" id="PTHR39159:SF1">
    <property type="entry name" value="UPF0374 PROTEIN YGAC"/>
    <property type="match status" value="1"/>
</dbReference>
<dbReference type="Pfam" id="PF04167">
    <property type="entry name" value="DUF402"/>
    <property type="match status" value="1"/>
</dbReference>
<dbReference type="PIRSF" id="PIRSF028345">
    <property type="entry name" value="UCP028345"/>
    <property type="match status" value="1"/>
</dbReference>
<dbReference type="SUPFAM" id="SSF159234">
    <property type="entry name" value="FomD-like"/>
    <property type="match status" value="1"/>
</dbReference>
<accession>A5IU33</accession>
<proteinExistence type="inferred from homology"/>
<feature type="chain" id="PRO_1000087829" description="Nucleoside triphosphate/diphosphate phosphatase">
    <location>
        <begin position="1"/>
        <end position="180"/>
    </location>
</feature>
<feature type="active site" description="Proton donor" evidence="1">
    <location>
        <position position="26"/>
    </location>
</feature>
<feature type="binding site" evidence="1">
    <location>
        <position position="90"/>
    </location>
    <ligand>
        <name>Mg(2+)</name>
        <dbReference type="ChEBI" id="CHEBI:18420"/>
        <label>1</label>
    </ligand>
</feature>
<feature type="binding site" evidence="1">
    <location>
        <position position="106"/>
    </location>
    <ligand>
        <name>Mg(2+)</name>
        <dbReference type="ChEBI" id="CHEBI:18420"/>
        <label>1</label>
    </ligand>
</feature>
<feature type="binding site" evidence="1">
    <location>
        <position position="108"/>
    </location>
    <ligand>
        <name>Mg(2+)</name>
        <dbReference type="ChEBI" id="CHEBI:18420"/>
        <label>2</label>
    </ligand>
</feature>
<feature type="binding site" evidence="1">
    <location>
        <position position="110"/>
    </location>
    <ligand>
        <name>Mg(2+)</name>
        <dbReference type="ChEBI" id="CHEBI:18420"/>
        <label>1</label>
    </ligand>
</feature>
<feature type="binding site" evidence="1">
    <location>
        <position position="110"/>
    </location>
    <ligand>
        <name>Mg(2+)</name>
        <dbReference type="ChEBI" id="CHEBI:18420"/>
        <label>2</label>
    </ligand>
</feature>
<feature type="binding site" evidence="1">
    <location>
        <position position="123"/>
    </location>
    <ligand>
        <name>Mg(2+)</name>
        <dbReference type="ChEBI" id="CHEBI:18420"/>
        <label>2</label>
    </ligand>
</feature>
<feature type="binding site" evidence="1">
    <location>
        <position position="126"/>
    </location>
    <ligand>
        <name>Mg(2+)</name>
        <dbReference type="ChEBI" id="CHEBI:18420"/>
        <label>2</label>
    </ligand>
</feature>
<name>NTDP_STAA9</name>
<sequence>MVRESIPKEGENIKIQSYKHDGKIHRVWSETTILKGTDHVVIGGNDHTLVTESDGRTWITREPAIVYFHSEYWFNVICMFREDGIYYYCNLSSPFVCDEEALKYIDYDLDIKVYPNGKYHLLDEDEYEQHMNQMNYPHDIDIILRRNVDILQQWIEQKKGPFAPDFIKVWKERYKKIRQY</sequence>
<keyword id="KW-0378">Hydrolase</keyword>
<keyword id="KW-0460">Magnesium</keyword>
<keyword id="KW-0479">Metal-binding</keyword>
<gene>
    <name type="ordered locus">SaurJH9_1921</name>
</gene>